<sequence>GIFSKLAGKKLKNLLISGLKSVGKEVGMDVVRTGIDIAGCKIKGEC</sequence>
<accession>P86018</accession>
<proteinExistence type="evidence at protein level"/>
<protein>
    <recommendedName>
        <fullName evidence="4">Esculentin-1R</fullName>
    </recommendedName>
</protein>
<name>ES1R_PELRI</name>
<keyword id="KW-0878">Amphibian defense peptide</keyword>
<keyword id="KW-0044">Antibiotic</keyword>
<keyword id="KW-0929">Antimicrobial</keyword>
<keyword id="KW-0204">Cytolysis</keyword>
<keyword id="KW-0903">Direct protein sequencing</keyword>
<keyword id="KW-1015">Disulfide bond</keyword>
<keyword id="KW-0354">Hemolysis</keyword>
<keyword id="KW-0964">Secreted</keyword>
<organism>
    <name type="scientific">Pelophylax ridibundus</name>
    <name type="common">Marsh frog</name>
    <name type="synonym">Rana ridibunda</name>
    <dbReference type="NCBI Taxonomy" id="8406"/>
    <lineage>
        <taxon>Eukaryota</taxon>
        <taxon>Metazoa</taxon>
        <taxon>Chordata</taxon>
        <taxon>Craniata</taxon>
        <taxon>Vertebrata</taxon>
        <taxon>Euteleostomi</taxon>
        <taxon>Amphibia</taxon>
        <taxon>Batrachia</taxon>
        <taxon>Anura</taxon>
        <taxon>Neobatrachia</taxon>
        <taxon>Ranoidea</taxon>
        <taxon>Ranidae</taxon>
        <taxon>Pelophylax</taxon>
    </lineage>
</organism>
<comment type="function">
    <text evidence="1">Shows antibacterial activity against representative Gram-negative and Gram-positive bacterial species, and hemolytic activity.</text>
</comment>
<comment type="subcellular location">
    <subcellularLocation>
        <location evidence="3">Secreted</location>
    </subcellularLocation>
</comment>
<comment type="tissue specificity">
    <text evidence="6">Expressed by the skin glands.</text>
</comment>
<comment type="mass spectrometry"/>
<comment type="similarity">
    <text evidence="2">Belongs to the frog skin active peptide (FSAP) family. Esculentin subfamily.</text>
</comment>
<evidence type="ECO:0000250" key="1"/>
<evidence type="ECO:0000255" key="2"/>
<evidence type="ECO:0000269" key="3">
    <source>
    </source>
</evidence>
<evidence type="ECO:0000303" key="4">
    <source>
    </source>
</evidence>
<evidence type="ECO:0000305" key="5"/>
<evidence type="ECO:0000305" key="6">
    <source>
    </source>
</evidence>
<reference evidence="5" key="1">
    <citation type="journal article" date="2008" name="Rapid Commun. Mass Spectrom.">
        <title>De novo sequencing of peptides secreted by the skin glands of the caucasian green frog Rana ridibunda.</title>
        <authorList>
            <person name="Samgina T.Y."/>
            <person name="Artemenko K.A."/>
            <person name="Gorshkov V.A."/>
            <person name="Ogourtsov S.V."/>
            <person name="Zubarev R.A."/>
            <person name="Lebedev A.T."/>
        </authorList>
    </citation>
    <scope>PROTEIN SEQUENCE</scope>
    <scope>MASS SPECTROMETRY</scope>
    <scope>DISULFIDE BOND</scope>
    <scope>SUBCELLULAR LOCATION</scope>
    <source>
        <tissue evidence="3">Skin secretion</tissue>
    </source>
</reference>
<dbReference type="GO" id="GO:0005576">
    <property type="term" value="C:extracellular region"/>
    <property type="evidence" value="ECO:0000314"/>
    <property type="project" value="UniProtKB"/>
</dbReference>
<dbReference type="GO" id="GO:0042742">
    <property type="term" value="P:defense response to bacterium"/>
    <property type="evidence" value="ECO:0007669"/>
    <property type="project" value="UniProtKB-KW"/>
</dbReference>
<dbReference type="GO" id="GO:0031640">
    <property type="term" value="P:killing of cells of another organism"/>
    <property type="evidence" value="ECO:0007669"/>
    <property type="project" value="UniProtKB-KW"/>
</dbReference>
<dbReference type="InterPro" id="IPR012521">
    <property type="entry name" value="Antimicrobial_frog_2"/>
</dbReference>
<dbReference type="Pfam" id="PF08023">
    <property type="entry name" value="Antimicrobial_2"/>
    <property type="match status" value="1"/>
</dbReference>
<feature type="peptide" id="PRO_0000361073" description="Esculentin-1R" evidence="3">
    <location>
        <begin position="1"/>
        <end position="46"/>
    </location>
</feature>
<feature type="disulfide bond" evidence="3">
    <location>
        <begin position="40"/>
        <end position="46"/>
    </location>
</feature>
<feature type="unsure residue" description="L or I" evidence="3">
    <location>
        <position position="11"/>
    </location>
</feature>